<organismHost>
    <name type="scientific">Pseudoalteromonas espejiana</name>
    <dbReference type="NCBI Taxonomy" id="28107"/>
</organismHost>
<gene>
    <name type="ORF">b</name>
    <name type="ORF">b*</name>
</gene>
<proteinExistence type="predicted"/>
<accession>Q9XJS7</accession>
<accession>Q9T0S2</accession>
<comment type="subcellular location">
    <subcellularLocation>
        <location evidence="2">Host membrane</location>
        <topology evidence="2">Single-pass membrane protein</topology>
    </subcellularLocation>
</comment>
<comment type="alternative products">
    <event type="alternative initiation"/>
    <isoform>
        <id>Q9XJS7-1</id>
        <name>Gp-b*</name>
        <sequence type="displayed"/>
    </isoform>
    <isoform>
        <id>Q9XJS7-2</id>
        <name>Gp-b</name>
        <sequence type="described" ref="VSP_034178"/>
    </isoform>
</comment>
<dbReference type="EMBL" id="AF155037">
    <property type="protein sequence ID" value="AAD43539.1"/>
    <property type="molecule type" value="Genomic_DNA"/>
</dbReference>
<dbReference type="EMBL" id="AF155037">
    <property type="protein sequence ID" value="AAD43559.1"/>
    <property type="molecule type" value="Genomic_DNA"/>
</dbReference>
<dbReference type="RefSeq" id="NP_049891.1">
    <molecule id="Q9XJS7-1"/>
    <property type="nucleotide sequence ID" value="NC_000867.1"/>
</dbReference>
<dbReference type="KEGG" id="vg:1262032"/>
<dbReference type="KEGG" id="vg:1262033"/>
<dbReference type="Proteomes" id="UP000002136">
    <property type="component" value="Genome"/>
</dbReference>
<dbReference type="GO" id="GO:0033644">
    <property type="term" value="C:host cell membrane"/>
    <property type="evidence" value="ECO:0007669"/>
    <property type="project" value="UniProtKB-SubCell"/>
</dbReference>
<dbReference type="GO" id="GO:0016020">
    <property type="term" value="C:membrane"/>
    <property type="evidence" value="ECO:0007669"/>
    <property type="project" value="UniProtKB-KW"/>
</dbReference>
<feature type="chain" id="PRO_0000339911" description="Uncharacterized protein Gp-b*">
    <location>
        <begin position="1"/>
        <end position="36"/>
    </location>
</feature>
<feature type="transmembrane region" description="Helical" evidence="1">
    <location>
        <begin position="13"/>
        <end position="35"/>
    </location>
</feature>
<feature type="splice variant" id="VSP_034178" description="In isoform Gp-b." evidence="2">
    <location>
        <begin position="1"/>
        <end position="6"/>
    </location>
</feature>
<organism>
    <name type="scientific">Pseudoalteromonas phage PM2</name>
    <name type="common">Bacteriophage PM2</name>
    <dbReference type="NCBI Taxonomy" id="2905728"/>
    <lineage>
        <taxon>Viruses</taxon>
        <taxon>Varidnaviria</taxon>
        <taxon>Bamfordvirae</taxon>
        <taxon>Preplasmiviricota</taxon>
        <taxon>Tectiliviricetes</taxon>
        <taxon>Vinavirales</taxon>
        <taxon>Corticoviridae</taxon>
        <taxon>Corticovirus</taxon>
        <taxon>Corticovirus PM2</taxon>
    </lineage>
</organism>
<reference key="1">
    <citation type="journal article" date="1999" name="Virology">
        <title>The complete genome sequence of PM2, the first lipid-containing bacterial virus to be isolated.</title>
        <authorList>
            <person name="Maennistoe R.H."/>
            <person name="Kivelae H.M."/>
            <person name="Paulin L."/>
            <person name="Bamford D.H."/>
            <person name="Bamford J.K."/>
        </authorList>
    </citation>
    <scope>NUCLEOTIDE SEQUENCE [GENOMIC DNA]</scope>
</reference>
<evidence type="ECO:0000255" key="1"/>
<evidence type="ECO:0000305" key="2"/>
<name>GPB_BPPM2</name>
<protein>
    <recommendedName>
        <fullName>Uncharacterized protein Gp-b*</fullName>
    </recommendedName>
</protein>
<sequence>MLTIYIMLNNYKSVILSPFPCCVLKSYLTVIYISFL</sequence>
<keyword id="KW-0024">Alternative initiation</keyword>
<keyword id="KW-1043">Host membrane</keyword>
<keyword id="KW-0472">Membrane</keyword>
<keyword id="KW-1185">Reference proteome</keyword>
<keyword id="KW-0812">Transmembrane</keyword>
<keyword id="KW-1133">Transmembrane helix</keyword>